<evidence type="ECO:0000250" key="1"/>
<evidence type="ECO:0000250" key="2">
    <source>
        <dbReference type="UniProtKB" id="Q8BFU0"/>
    </source>
</evidence>
<evidence type="ECO:0000255" key="3"/>
<evidence type="ECO:0000255" key="4">
    <source>
        <dbReference type="PROSITE-ProRule" id="PRU00210"/>
    </source>
</evidence>
<evidence type="ECO:0000256" key="5">
    <source>
        <dbReference type="SAM" id="MobiDB-lite"/>
    </source>
</evidence>
<evidence type="ECO:0000269" key="6">
    <source>
    </source>
</evidence>
<evidence type="ECO:0000269" key="7">
    <source>
    </source>
</evidence>
<evidence type="ECO:0000269" key="8">
    <source>
    </source>
</evidence>
<evidence type="ECO:0000269" key="9">
    <source>
    </source>
</evidence>
<evidence type="ECO:0000269" key="10">
    <source>
    </source>
</evidence>
<evidence type="ECO:0000269" key="11">
    <source>
    </source>
</evidence>
<evidence type="ECO:0000269" key="12">
    <source>
    </source>
</evidence>
<evidence type="ECO:0000269" key="13">
    <source ref="4"/>
</evidence>
<evidence type="ECO:0000303" key="14">
    <source>
    </source>
</evidence>
<evidence type="ECO:0000305" key="15"/>
<evidence type="ECO:0007829" key="16">
    <source>
        <dbReference type="PDB" id="8XFS"/>
    </source>
</evidence>
<comment type="function">
    <text evidence="9 10 11 12">Activator of the canonical Wnt signaling pathway by acting as a ligand for LGR4-6 receptors. Upon binding to LGR4-6 (LGR4, LGR5 or LGR6), LGR4-6 associate with phosphorylated LRP6 and frizzled receptors that are activated by extracellular Wnt receptors, triggering the canonical Wnt signaling pathway to increase expression of target genes. Also regulates the canonical Wnt/beta-catenin-dependent pathway and non-canonical Wnt signaling by acting as an inhibitor of ZNRF3, an important regulator of the Wnt signaling pathway (PubMed:21727895, PubMed:21909076, PubMed:22615920). During embryonic development, plays a crucial role in limb specification, amplifying the Wnt signaling pathway independently of LGR4-6 receptors, possibly by acting as a direct antagonistic ligand to RNF43 and ZNRF3, hence governing the number of limbs an embryo should form (PubMed:29769720).</text>
</comment>
<comment type="subunit">
    <text evidence="2 9 10 11 12">Interacts with WNT1 (By similarity). Binds heparin (By similarity). Interacts with LGR4, LGR5 and LGR6 (PubMed:21727895, PubMed:21909076, PubMed:22615920, PubMed:29769720). Interacts with E3 ubiquitin ligases RNF43 and ZNRF3 (PubMed:29769720).</text>
</comment>
<comment type="interaction">
    <interactant intactId="EBI-8481036">
        <id>Q6UXX9</id>
    </interactant>
    <interactant intactId="EBI-10178153">
        <id>P60372</id>
        <label>KRTAP10-4</label>
    </interactant>
    <organismsDiffer>false</organismsDiffer>
    <experiments>3</experiments>
</comment>
<comment type="interaction">
    <interactant intactId="EBI-8481036">
        <id>Q6UXX9</id>
    </interactant>
    <interactant intactId="EBI-10172290">
        <id>P60409</id>
        <label>KRTAP10-7</label>
    </interactant>
    <organismsDiffer>false</organismsDiffer>
    <experiments>3</experiments>
</comment>
<comment type="interaction">
    <interactant intactId="EBI-8481036">
        <id>Q6UXX9</id>
    </interactant>
    <interactant intactId="EBI-10172052">
        <id>P60411</id>
        <label>KRTAP10-9</label>
    </interactant>
    <organismsDiffer>false</organismsDiffer>
    <experiments>3</experiments>
</comment>
<comment type="interaction">
    <interactant intactId="EBI-8481036">
        <id>Q6UXX9</id>
    </interactant>
    <interactant intactId="EBI-742388">
        <id>Q9H8W4</id>
        <label>PLEKHF2</label>
    </interactant>
    <organismsDiffer>false</organismsDiffer>
    <experiments>3</experiments>
</comment>
<comment type="interaction">
    <interactant intactId="EBI-12009390">
        <id>Q6UXX9-2</id>
    </interactant>
    <interactant intactId="EBI-744545">
        <id>Q8NEC5</id>
        <label>CATSPER1</label>
    </interactant>
    <organismsDiffer>false</organismsDiffer>
    <experiments>3</experiments>
</comment>
<comment type="interaction">
    <interactant intactId="EBI-12009390">
        <id>Q6UXX9-2</id>
    </interactant>
    <interactant intactId="EBI-3867333">
        <id>A8MQ03</id>
        <label>CYSRT1</label>
    </interactant>
    <organismsDiffer>false</organismsDiffer>
    <experiments>3</experiments>
</comment>
<comment type="interaction">
    <interactant intactId="EBI-12009390">
        <id>Q6UXX9-2</id>
    </interactant>
    <interactant intactId="EBI-740785">
        <id>P49639</id>
        <label>HOXA1</label>
    </interactant>
    <organismsDiffer>false</organismsDiffer>
    <experiments>3</experiments>
</comment>
<comment type="interaction">
    <interactant intactId="EBI-12009390">
        <id>Q6UXX9-2</id>
    </interactant>
    <interactant intactId="EBI-12012928">
        <id>P60371</id>
        <label>KRTAP10-6</label>
    </interactant>
    <organismsDiffer>false</organismsDiffer>
    <experiments>3</experiments>
</comment>
<comment type="interaction">
    <interactant intactId="EBI-12009390">
        <id>Q6UXX9-2</id>
    </interactant>
    <interactant intactId="EBI-10172290">
        <id>P60409</id>
        <label>KRTAP10-7</label>
    </interactant>
    <organismsDiffer>false</organismsDiffer>
    <experiments>3</experiments>
</comment>
<comment type="interaction">
    <interactant intactId="EBI-12009390">
        <id>Q6UXX9-2</id>
    </interactant>
    <interactant intactId="EBI-11953334">
        <id>P60328</id>
        <label>KRTAP12-3</label>
    </interactant>
    <organismsDiffer>false</organismsDiffer>
    <experiments>3</experiments>
</comment>
<comment type="interaction">
    <interactant intactId="EBI-12009390">
        <id>Q6UXX9-2</id>
    </interactant>
    <interactant intactId="EBI-1051105">
        <id>Q92504</id>
        <label>SLC39A7</label>
    </interactant>
    <organismsDiffer>false</organismsDiffer>
    <experiments>3</experiments>
</comment>
<comment type="interaction">
    <interactant intactId="EBI-12009390">
        <id>Q6UXX9-2</id>
    </interactant>
    <interactant intactId="EBI-5235340">
        <id>Q7Z699</id>
        <label>SPRED1</label>
    </interactant>
    <organismsDiffer>false</organismsDiffer>
    <experiments>3</experiments>
</comment>
<comment type="interaction">
    <interactant intactId="EBI-12009390">
        <id>Q6UXX9-2</id>
    </interactant>
    <interactant intactId="EBI-373456">
        <id>Q9Y3S2</id>
        <label>ZNF330</label>
    </interactant>
    <organismsDiffer>false</organismsDiffer>
    <experiments>3</experiments>
</comment>
<comment type="interaction">
    <interactant intactId="EBI-12009390">
        <id>Q6UXX9-2</id>
    </interactant>
    <interactant intactId="EBI-11962574">
        <id>Q96EG3</id>
        <label>ZNF837</label>
    </interactant>
    <organismsDiffer>false</organismsDiffer>
    <experiments>3</experiments>
</comment>
<comment type="subcellular location">
    <subcellularLocation>
        <location evidence="2">Secreted</location>
    </subcellularLocation>
</comment>
<comment type="alternative products">
    <event type="alternative splicing"/>
    <isoform>
        <id>Q6UXX9-1</id>
        <name>1</name>
        <sequence type="displayed"/>
    </isoform>
    <isoform>
        <id>Q6UXX9-2</id>
        <name>2</name>
        <sequence type="described" ref="VSP_018321"/>
    </isoform>
    <isoform>
        <id>Q6UXX9-3</id>
        <name>3</name>
        <sequence type="described" ref="VSP_018322 VSP_018323"/>
    </isoform>
</comment>
<comment type="domain">
    <text evidence="1">The FU repeat is required for activation and stabilization of beta-catenin.</text>
</comment>
<comment type="disease" evidence="12">
    <disease id="DI-05280">
        <name>Tetraamelia syndrome 2</name>
        <acronym>TETAMS2</acronym>
        <description>A form of tetraamelia, a rare disease characterized by rudimentary appendages or complete absence of all four limbs, and other anomalies such as craniofacial, nervous system, pulmonary, skeletal and urogenital defects. TETAMS2 patients manifest limb deformities, bilateral agenesis of the lungs, abnormalities of the pulmonary vasculature, labioscrotal fold aplasia, and dysmorphic features including bilateral cleft lip/palate, ankyloglossia, mandibular hypoplasia, and microretrognathia. TETAMS2 transmission pattern is consistent with autosomal recessive inheritance.</description>
        <dbReference type="MIM" id="618021"/>
    </disease>
    <text>The disease is caused by variants affecting the gene represented in this entry.</text>
</comment>
<comment type="disease" evidence="12">
    <disease id="DI-05281">
        <name>Humerofemoral hypoplasia with radiotibial ray deficiency</name>
        <acronym>HHRRD</acronym>
        <description>A severe disease characterized by reduction of all four limbs as well as hypoplasia of the upper limb girdle and pelvis. Rudimentary finger- or toe-like appendages may be present. HHRRD transmission pattern is consistent with autosomal recessive inheritance.</description>
        <dbReference type="MIM" id="618022"/>
    </disease>
    <text>The disease is caused by variants affecting the gene represented in this entry.</text>
</comment>
<comment type="similarity">
    <text evidence="15">Belongs to the R-spondin family.</text>
</comment>
<protein>
    <recommendedName>
        <fullName>R-spondin-2</fullName>
    </recommendedName>
    <alternativeName>
        <fullName>Roof plate-specific spondin-2</fullName>
        <shortName>hRspo2</shortName>
    </alternativeName>
</protein>
<proteinExistence type="evidence at protein level"/>
<sequence length="243" mass="28315">MQFRLFSFALIILNCMDYSHCQGNRWRRSKRASYVSNPICKGCLSCSKDNGCSRCQQKLFFFLRREGMRQYGECLHSCPSGYYGHRAPDMNRCARCRIENCDSCFSKDFCTKCKVGFYLHRGRCFDECPDGFAPLEETMECVEGCEVGHWSEWGTCSRNNRTCGFKWGLETRTRQIVKKPVKDTILCPTIAESRRCKMTMRHCPGGKRTPKAKEKRNKKKKRKLIERAQEQHSVFLATDRANQ</sequence>
<dbReference type="EMBL" id="AY358166">
    <property type="protein sequence ID" value="AAQ88533.1"/>
    <property type="molecule type" value="mRNA"/>
</dbReference>
<dbReference type="EMBL" id="AK123023">
    <property type="protein sequence ID" value="BAG53852.1"/>
    <property type="molecule type" value="mRNA"/>
</dbReference>
<dbReference type="EMBL" id="AC025508">
    <property type="status" value="NOT_ANNOTATED_CDS"/>
    <property type="molecule type" value="Genomic_DNA"/>
</dbReference>
<dbReference type="EMBL" id="AP003479">
    <property type="status" value="NOT_ANNOTATED_CDS"/>
    <property type="molecule type" value="Genomic_DNA"/>
</dbReference>
<dbReference type="EMBL" id="CH471060">
    <property type="protein sequence ID" value="EAW91916.1"/>
    <property type="molecule type" value="Genomic_DNA"/>
</dbReference>
<dbReference type="EMBL" id="BC027938">
    <property type="protein sequence ID" value="AAH27938.1"/>
    <property type="molecule type" value="mRNA"/>
</dbReference>
<dbReference type="EMBL" id="BC036554">
    <property type="protein sequence ID" value="AAH36554.1"/>
    <property type="molecule type" value="mRNA"/>
</dbReference>
<dbReference type="CCDS" id="CCDS6307.1">
    <molecule id="Q6UXX9-1"/>
</dbReference>
<dbReference type="CCDS" id="CCDS64953.1">
    <molecule id="Q6UXX9-3"/>
</dbReference>
<dbReference type="CCDS" id="CCDS83314.1">
    <molecule id="Q6UXX9-2"/>
</dbReference>
<dbReference type="RefSeq" id="NP_001269792.1">
    <molecule id="Q6UXX9-3"/>
    <property type="nucleotide sequence ID" value="NM_001282863.2"/>
</dbReference>
<dbReference type="RefSeq" id="NP_001304871.1">
    <molecule id="Q6UXX9-2"/>
    <property type="nucleotide sequence ID" value="NM_001317942.2"/>
</dbReference>
<dbReference type="RefSeq" id="NP_848660.3">
    <molecule id="Q6UXX9-1"/>
    <property type="nucleotide sequence ID" value="NM_178565.4"/>
</dbReference>
<dbReference type="PDB" id="8XFP">
    <property type="method" value="EM"/>
    <property type="resolution" value="3.21 A"/>
    <property type="chains" value="G/J=41-141"/>
</dbReference>
<dbReference type="PDB" id="8XFS">
    <property type="method" value="EM"/>
    <property type="resolution" value="3.20 A"/>
    <property type="chains" value="B/D=41-141"/>
</dbReference>
<dbReference type="PDB" id="8XFT">
    <property type="method" value="EM"/>
    <property type="resolution" value="3.24 A"/>
    <property type="chains" value="G=1-243"/>
</dbReference>
<dbReference type="PDB" id="8XUM">
    <property type="method" value="EM"/>
    <property type="resolution" value="2.90 A"/>
    <property type="chains" value="B=1-243"/>
</dbReference>
<dbReference type="PDB" id="8Y69">
    <property type="method" value="EM"/>
    <property type="resolution" value="3.38 A"/>
    <property type="chains" value="G/J=41-141"/>
</dbReference>
<dbReference type="PDBsum" id="8XFP"/>
<dbReference type="PDBsum" id="8XFS"/>
<dbReference type="PDBsum" id="8XFT"/>
<dbReference type="PDBsum" id="8XUM"/>
<dbReference type="PDBsum" id="8Y69"/>
<dbReference type="EMDB" id="EMD-38309"/>
<dbReference type="EMDB" id="EMD-38677"/>
<dbReference type="SMR" id="Q6UXX9"/>
<dbReference type="BioGRID" id="131049">
    <property type="interactions" value="22"/>
</dbReference>
<dbReference type="CORUM" id="Q6UXX9"/>
<dbReference type="FunCoup" id="Q6UXX9">
    <property type="interactions" value="401"/>
</dbReference>
<dbReference type="IntAct" id="Q6UXX9">
    <property type="interactions" value="16"/>
</dbReference>
<dbReference type="MINT" id="Q6UXX9"/>
<dbReference type="STRING" id="9606.ENSP00000276659"/>
<dbReference type="GlyCosmos" id="Q6UXX9">
    <property type="glycosylation" value="1 site, No reported glycans"/>
</dbReference>
<dbReference type="GlyGen" id="Q6UXX9">
    <property type="glycosylation" value="4 sites, 1 O-linked glycan (1 site)"/>
</dbReference>
<dbReference type="iPTMnet" id="Q6UXX9"/>
<dbReference type="PhosphoSitePlus" id="Q6UXX9"/>
<dbReference type="BioMuta" id="RSPO2"/>
<dbReference type="DMDM" id="147744588"/>
<dbReference type="PaxDb" id="9606-ENSP00000276659"/>
<dbReference type="PeptideAtlas" id="Q6UXX9"/>
<dbReference type="ProteomicsDB" id="67672">
    <molecule id="Q6UXX9-1"/>
</dbReference>
<dbReference type="ProteomicsDB" id="67673">
    <molecule id="Q6UXX9-2"/>
</dbReference>
<dbReference type="ProteomicsDB" id="67674">
    <molecule id="Q6UXX9-3"/>
</dbReference>
<dbReference type="Antibodypedia" id="26506">
    <property type="antibodies" value="141 antibodies from 25 providers"/>
</dbReference>
<dbReference type="DNASU" id="340419"/>
<dbReference type="Ensembl" id="ENST00000276659.10">
    <molecule id="Q6UXX9-1"/>
    <property type="protein sequence ID" value="ENSP00000276659.5"/>
    <property type="gene ID" value="ENSG00000147655.12"/>
</dbReference>
<dbReference type="Ensembl" id="ENST00000517781.5">
    <molecule id="Q6UXX9-3"/>
    <property type="protein sequence ID" value="ENSP00000427937.1"/>
    <property type="gene ID" value="ENSG00000147655.12"/>
</dbReference>
<dbReference type="Ensembl" id="ENST00000517939.5">
    <molecule id="Q6UXX9-2"/>
    <property type="protein sequence ID" value="ENSP00000428940.1"/>
    <property type="gene ID" value="ENSG00000147655.12"/>
</dbReference>
<dbReference type="GeneID" id="340419"/>
<dbReference type="KEGG" id="hsa:340419"/>
<dbReference type="MANE-Select" id="ENST00000276659.10">
    <property type="protein sequence ID" value="ENSP00000276659.5"/>
    <property type="RefSeq nucleotide sequence ID" value="NM_178565.5"/>
    <property type="RefSeq protein sequence ID" value="NP_848660.3"/>
</dbReference>
<dbReference type="UCSC" id="uc003ymq.4">
    <molecule id="Q6UXX9-1"/>
    <property type="organism name" value="human"/>
</dbReference>
<dbReference type="AGR" id="HGNC:28583"/>
<dbReference type="CTD" id="340419"/>
<dbReference type="DisGeNET" id="340419"/>
<dbReference type="GeneCards" id="RSPO2"/>
<dbReference type="HGNC" id="HGNC:28583">
    <property type="gene designation" value="RSPO2"/>
</dbReference>
<dbReference type="HPA" id="ENSG00000147655">
    <property type="expression patterns" value="Tissue enhanced (brain, intestine, placenta)"/>
</dbReference>
<dbReference type="MalaCards" id="RSPO2"/>
<dbReference type="MIM" id="610575">
    <property type="type" value="gene"/>
</dbReference>
<dbReference type="MIM" id="618021">
    <property type="type" value="phenotype"/>
</dbReference>
<dbReference type="MIM" id="618022">
    <property type="type" value="phenotype"/>
</dbReference>
<dbReference type="neXtProt" id="NX_Q6UXX9"/>
<dbReference type="OpenTargets" id="ENSG00000147655"/>
<dbReference type="Orphanet" id="3301">
    <property type="disease" value="Tetraamelia-multiple malformations syndrome"/>
</dbReference>
<dbReference type="PharmGKB" id="PA142670968"/>
<dbReference type="VEuPathDB" id="HostDB:ENSG00000147655"/>
<dbReference type="eggNOG" id="KOG3525">
    <property type="taxonomic scope" value="Eukaryota"/>
</dbReference>
<dbReference type="GeneTree" id="ENSGT00940000159194"/>
<dbReference type="HOGENOM" id="CLU_064219_1_0_1"/>
<dbReference type="InParanoid" id="Q6UXX9"/>
<dbReference type="OMA" id="HGECLHA"/>
<dbReference type="OrthoDB" id="10257656at2759"/>
<dbReference type="PAN-GO" id="Q6UXX9">
    <property type="GO annotations" value="1 GO annotation based on evolutionary models"/>
</dbReference>
<dbReference type="PhylomeDB" id="Q6UXX9"/>
<dbReference type="TreeFam" id="TF331799"/>
<dbReference type="PathwayCommons" id="Q6UXX9"/>
<dbReference type="Reactome" id="R-HSA-4641263">
    <property type="pathway name" value="Regulation of FZD by ubiquitination"/>
</dbReference>
<dbReference type="SignaLink" id="Q6UXX9"/>
<dbReference type="SIGNOR" id="Q6UXX9"/>
<dbReference type="BioGRID-ORCS" id="340419">
    <property type="hits" value="13 hits in 1146 CRISPR screens"/>
</dbReference>
<dbReference type="ChiTaRS" id="RSPO2">
    <property type="organism name" value="human"/>
</dbReference>
<dbReference type="GeneWiki" id="RSPO2"/>
<dbReference type="GenomeRNAi" id="340419"/>
<dbReference type="Pharos" id="Q6UXX9">
    <property type="development level" value="Tbio"/>
</dbReference>
<dbReference type="PRO" id="PR:Q6UXX9"/>
<dbReference type="Proteomes" id="UP000005640">
    <property type="component" value="Chromosome 8"/>
</dbReference>
<dbReference type="RNAct" id="Q6UXX9">
    <property type="molecule type" value="protein"/>
</dbReference>
<dbReference type="Bgee" id="ENSG00000147655">
    <property type="expression patterns" value="Expressed in secondary oocyte and 108 other cell types or tissues"/>
</dbReference>
<dbReference type="ExpressionAtlas" id="Q6UXX9">
    <property type="expression patterns" value="baseline and differential"/>
</dbReference>
<dbReference type="GO" id="GO:0009986">
    <property type="term" value="C:cell surface"/>
    <property type="evidence" value="ECO:0007669"/>
    <property type="project" value="Ensembl"/>
</dbReference>
<dbReference type="GO" id="GO:0005576">
    <property type="term" value="C:extracellular region"/>
    <property type="evidence" value="ECO:0000304"/>
    <property type="project" value="Reactome"/>
</dbReference>
<dbReference type="GO" id="GO:0005615">
    <property type="term" value="C:extracellular space"/>
    <property type="evidence" value="ECO:0000318"/>
    <property type="project" value="GO_Central"/>
</dbReference>
<dbReference type="GO" id="GO:0070700">
    <property type="term" value="F:BMP receptor binding"/>
    <property type="evidence" value="ECO:0000318"/>
    <property type="project" value="GO_Central"/>
</dbReference>
<dbReference type="GO" id="GO:0008201">
    <property type="term" value="F:heparin binding"/>
    <property type="evidence" value="ECO:0007669"/>
    <property type="project" value="UniProtKB-KW"/>
</dbReference>
<dbReference type="GO" id="GO:0005102">
    <property type="term" value="F:signaling receptor binding"/>
    <property type="evidence" value="ECO:0000353"/>
    <property type="project" value="UniProtKB"/>
</dbReference>
<dbReference type="GO" id="GO:0030282">
    <property type="term" value="P:bone mineralization"/>
    <property type="evidence" value="ECO:0007669"/>
    <property type="project" value="Ensembl"/>
</dbReference>
<dbReference type="GO" id="GO:0060070">
    <property type="term" value="P:canonical Wnt signaling pathway"/>
    <property type="evidence" value="ECO:0007669"/>
    <property type="project" value="Ensembl"/>
</dbReference>
<dbReference type="GO" id="GO:0071542">
    <property type="term" value="P:dopaminergic neuron differentiation"/>
    <property type="evidence" value="ECO:0007669"/>
    <property type="project" value="Ensembl"/>
</dbReference>
<dbReference type="GO" id="GO:0035115">
    <property type="term" value="P:embryonic forelimb morphogenesis"/>
    <property type="evidence" value="ECO:0007669"/>
    <property type="project" value="Ensembl"/>
</dbReference>
<dbReference type="GO" id="GO:0035116">
    <property type="term" value="P:embryonic hindlimb morphogenesis"/>
    <property type="evidence" value="ECO:0007669"/>
    <property type="project" value="Ensembl"/>
</dbReference>
<dbReference type="GO" id="GO:0060441">
    <property type="term" value="P:epithelial tube branching involved in lung morphogenesis"/>
    <property type="evidence" value="ECO:0007669"/>
    <property type="project" value="Ensembl"/>
</dbReference>
<dbReference type="GO" id="GO:0060173">
    <property type="term" value="P:limb development"/>
    <property type="evidence" value="ECO:0000315"/>
    <property type="project" value="UniProtKB"/>
</dbReference>
<dbReference type="GO" id="GO:0060437">
    <property type="term" value="P:lung growth"/>
    <property type="evidence" value="ECO:0007669"/>
    <property type="project" value="Ensembl"/>
</dbReference>
<dbReference type="GO" id="GO:0042489">
    <property type="term" value="P:negative regulation of odontogenesis of dentin-containing tooth"/>
    <property type="evidence" value="ECO:0007669"/>
    <property type="project" value="Ensembl"/>
</dbReference>
<dbReference type="GO" id="GO:0001649">
    <property type="term" value="P:osteoblast differentiation"/>
    <property type="evidence" value="ECO:0007669"/>
    <property type="project" value="Ensembl"/>
</dbReference>
<dbReference type="GO" id="GO:0090263">
    <property type="term" value="P:positive regulation of canonical Wnt signaling pathway"/>
    <property type="evidence" value="ECO:0000318"/>
    <property type="project" value="GO_Central"/>
</dbReference>
<dbReference type="GO" id="GO:0030177">
    <property type="term" value="P:positive regulation of Wnt signaling pathway"/>
    <property type="evidence" value="ECO:0000314"/>
    <property type="project" value="UniProtKB"/>
</dbReference>
<dbReference type="GO" id="GO:0060535">
    <property type="term" value="P:trachea cartilage morphogenesis"/>
    <property type="evidence" value="ECO:0007669"/>
    <property type="project" value="Ensembl"/>
</dbReference>
<dbReference type="CDD" id="cd00064">
    <property type="entry name" value="FU"/>
    <property type="match status" value="1"/>
</dbReference>
<dbReference type="FunFam" id="2.20.100.10:FF:000028">
    <property type="entry name" value="R-spondin 2"/>
    <property type="match status" value="1"/>
</dbReference>
<dbReference type="FunFam" id="2.10.220.10:FF:000012">
    <property type="entry name" value="R-spondin 4"/>
    <property type="match status" value="1"/>
</dbReference>
<dbReference type="Gene3D" id="2.10.220.10">
    <property type="entry name" value="Hormone Receptor, Insulin-like Growth Factor Receptor 1, Chain A, domain 2"/>
    <property type="match status" value="1"/>
</dbReference>
<dbReference type="Gene3D" id="2.20.100.10">
    <property type="entry name" value="Thrombospondin type-1 (TSP1) repeat"/>
    <property type="match status" value="1"/>
</dbReference>
<dbReference type="InterPro" id="IPR006212">
    <property type="entry name" value="Furin_repeat"/>
</dbReference>
<dbReference type="InterPro" id="IPR009030">
    <property type="entry name" value="Growth_fac_rcpt_cys_sf"/>
</dbReference>
<dbReference type="InterPro" id="IPR051514">
    <property type="entry name" value="R-spondin"/>
</dbReference>
<dbReference type="InterPro" id="IPR043601">
    <property type="entry name" value="Rspo_Fu-CRD_dom"/>
</dbReference>
<dbReference type="InterPro" id="IPR000884">
    <property type="entry name" value="TSP1_rpt"/>
</dbReference>
<dbReference type="InterPro" id="IPR036383">
    <property type="entry name" value="TSP1_rpt_sf"/>
</dbReference>
<dbReference type="PANTHER" id="PTHR46987">
    <property type="entry name" value="NEUROHYPOPHYSIAL HORMONES, N-TERMINAL DOMAIN CONTAINING PROTEIN"/>
    <property type="match status" value="1"/>
</dbReference>
<dbReference type="PANTHER" id="PTHR46987:SF4">
    <property type="entry name" value="R-SPONDIN-2"/>
    <property type="match status" value="1"/>
</dbReference>
<dbReference type="Pfam" id="PF15913">
    <property type="entry name" value="Furin-like_2"/>
    <property type="match status" value="1"/>
</dbReference>
<dbReference type="SMART" id="SM00261">
    <property type="entry name" value="FU"/>
    <property type="match status" value="2"/>
</dbReference>
<dbReference type="SMART" id="SM00209">
    <property type="entry name" value="TSP1"/>
    <property type="match status" value="1"/>
</dbReference>
<dbReference type="SUPFAM" id="SSF57184">
    <property type="entry name" value="Growth factor receptor domain"/>
    <property type="match status" value="1"/>
</dbReference>
<dbReference type="SUPFAM" id="SSF82895">
    <property type="entry name" value="TSP-1 type 1 repeat"/>
    <property type="match status" value="1"/>
</dbReference>
<dbReference type="PROSITE" id="PS50092">
    <property type="entry name" value="TSP1"/>
    <property type="match status" value="1"/>
</dbReference>
<reference key="1">
    <citation type="journal article" date="2003" name="Genome Res.">
        <title>The secreted protein discovery initiative (SPDI), a large-scale effort to identify novel human secreted and transmembrane proteins: a bioinformatics assessment.</title>
        <authorList>
            <person name="Clark H.F."/>
            <person name="Gurney A.L."/>
            <person name="Abaya E."/>
            <person name="Baker K."/>
            <person name="Baldwin D.T."/>
            <person name="Brush J."/>
            <person name="Chen J."/>
            <person name="Chow B."/>
            <person name="Chui C."/>
            <person name="Crowley C."/>
            <person name="Currell B."/>
            <person name="Deuel B."/>
            <person name="Dowd P."/>
            <person name="Eaton D."/>
            <person name="Foster J.S."/>
            <person name="Grimaldi C."/>
            <person name="Gu Q."/>
            <person name="Hass P.E."/>
            <person name="Heldens S."/>
            <person name="Huang A."/>
            <person name="Kim H.S."/>
            <person name="Klimowski L."/>
            <person name="Jin Y."/>
            <person name="Johnson S."/>
            <person name="Lee J."/>
            <person name="Lewis L."/>
            <person name="Liao D."/>
            <person name="Mark M.R."/>
            <person name="Robbie E."/>
            <person name="Sanchez C."/>
            <person name="Schoenfeld J."/>
            <person name="Seshagiri S."/>
            <person name="Simmons L."/>
            <person name="Singh J."/>
            <person name="Smith V."/>
            <person name="Stinson J."/>
            <person name="Vagts A."/>
            <person name="Vandlen R.L."/>
            <person name="Watanabe C."/>
            <person name="Wieand D."/>
            <person name="Woods K."/>
            <person name="Xie M.-H."/>
            <person name="Yansura D.G."/>
            <person name="Yi S."/>
            <person name="Yu G."/>
            <person name="Yuan J."/>
            <person name="Zhang M."/>
            <person name="Zhang Z."/>
            <person name="Goddard A.D."/>
            <person name="Wood W.I."/>
            <person name="Godowski P.J."/>
            <person name="Gray A.M."/>
        </authorList>
    </citation>
    <scope>NUCLEOTIDE SEQUENCE [LARGE SCALE MRNA] (ISOFORM 1)</scope>
    <scope>VARIANT PRO-186</scope>
</reference>
<reference key="2">
    <citation type="journal article" date="2004" name="Nat. Genet.">
        <title>Complete sequencing and characterization of 21,243 full-length human cDNAs.</title>
        <authorList>
            <person name="Ota T."/>
            <person name="Suzuki Y."/>
            <person name="Nishikawa T."/>
            <person name="Otsuki T."/>
            <person name="Sugiyama T."/>
            <person name="Irie R."/>
            <person name="Wakamatsu A."/>
            <person name="Hayashi K."/>
            <person name="Sato H."/>
            <person name="Nagai K."/>
            <person name="Kimura K."/>
            <person name="Makita H."/>
            <person name="Sekine M."/>
            <person name="Obayashi M."/>
            <person name="Nishi T."/>
            <person name="Shibahara T."/>
            <person name="Tanaka T."/>
            <person name="Ishii S."/>
            <person name="Yamamoto J."/>
            <person name="Saito K."/>
            <person name="Kawai Y."/>
            <person name="Isono Y."/>
            <person name="Nakamura Y."/>
            <person name="Nagahari K."/>
            <person name="Murakami K."/>
            <person name="Yasuda T."/>
            <person name="Iwayanagi T."/>
            <person name="Wagatsuma M."/>
            <person name="Shiratori A."/>
            <person name="Sudo H."/>
            <person name="Hosoiri T."/>
            <person name="Kaku Y."/>
            <person name="Kodaira H."/>
            <person name="Kondo H."/>
            <person name="Sugawara M."/>
            <person name="Takahashi M."/>
            <person name="Kanda K."/>
            <person name="Yokoi T."/>
            <person name="Furuya T."/>
            <person name="Kikkawa E."/>
            <person name="Omura Y."/>
            <person name="Abe K."/>
            <person name="Kamihara K."/>
            <person name="Katsuta N."/>
            <person name="Sato K."/>
            <person name="Tanikawa M."/>
            <person name="Yamazaki M."/>
            <person name="Ninomiya K."/>
            <person name="Ishibashi T."/>
            <person name="Yamashita H."/>
            <person name="Murakawa K."/>
            <person name="Fujimori K."/>
            <person name="Tanai H."/>
            <person name="Kimata M."/>
            <person name="Watanabe M."/>
            <person name="Hiraoka S."/>
            <person name="Chiba Y."/>
            <person name="Ishida S."/>
            <person name="Ono Y."/>
            <person name="Takiguchi S."/>
            <person name="Watanabe S."/>
            <person name="Yosida M."/>
            <person name="Hotuta T."/>
            <person name="Kusano J."/>
            <person name="Kanehori K."/>
            <person name="Takahashi-Fujii A."/>
            <person name="Hara H."/>
            <person name="Tanase T.-O."/>
            <person name="Nomura Y."/>
            <person name="Togiya S."/>
            <person name="Komai F."/>
            <person name="Hara R."/>
            <person name="Takeuchi K."/>
            <person name="Arita M."/>
            <person name="Imose N."/>
            <person name="Musashino K."/>
            <person name="Yuuki H."/>
            <person name="Oshima A."/>
            <person name="Sasaki N."/>
            <person name="Aotsuka S."/>
            <person name="Yoshikawa Y."/>
            <person name="Matsunawa H."/>
            <person name="Ichihara T."/>
            <person name="Shiohata N."/>
            <person name="Sano S."/>
            <person name="Moriya S."/>
            <person name="Momiyama H."/>
            <person name="Satoh N."/>
            <person name="Takami S."/>
            <person name="Terashima Y."/>
            <person name="Suzuki O."/>
            <person name="Nakagawa S."/>
            <person name="Senoh A."/>
            <person name="Mizoguchi H."/>
            <person name="Goto Y."/>
            <person name="Shimizu F."/>
            <person name="Wakebe H."/>
            <person name="Hishigaki H."/>
            <person name="Watanabe T."/>
            <person name="Sugiyama A."/>
            <person name="Takemoto M."/>
            <person name="Kawakami B."/>
            <person name="Yamazaki M."/>
            <person name="Watanabe K."/>
            <person name="Kumagai A."/>
            <person name="Itakura S."/>
            <person name="Fukuzumi Y."/>
            <person name="Fujimori Y."/>
            <person name="Komiyama M."/>
            <person name="Tashiro H."/>
            <person name="Tanigami A."/>
            <person name="Fujiwara T."/>
            <person name="Ono T."/>
            <person name="Yamada K."/>
            <person name="Fujii Y."/>
            <person name="Ozaki K."/>
            <person name="Hirao M."/>
            <person name="Ohmori Y."/>
            <person name="Kawabata A."/>
            <person name="Hikiji T."/>
            <person name="Kobatake N."/>
            <person name="Inagaki H."/>
            <person name="Ikema Y."/>
            <person name="Okamoto S."/>
            <person name="Okitani R."/>
            <person name="Kawakami T."/>
            <person name="Noguchi S."/>
            <person name="Itoh T."/>
            <person name="Shigeta K."/>
            <person name="Senba T."/>
            <person name="Matsumura K."/>
            <person name="Nakajima Y."/>
            <person name="Mizuno T."/>
            <person name="Morinaga M."/>
            <person name="Sasaki M."/>
            <person name="Togashi T."/>
            <person name="Oyama M."/>
            <person name="Hata H."/>
            <person name="Watanabe M."/>
            <person name="Komatsu T."/>
            <person name="Mizushima-Sugano J."/>
            <person name="Satoh T."/>
            <person name="Shirai Y."/>
            <person name="Takahashi Y."/>
            <person name="Nakagawa K."/>
            <person name="Okumura K."/>
            <person name="Nagase T."/>
            <person name="Nomura N."/>
            <person name="Kikuchi H."/>
            <person name="Masuho Y."/>
            <person name="Yamashita R."/>
            <person name="Nakai K."/>
            <person name="Yada T."/>
            <person name="Nakamura Y."/>
            <person name="Ohara O."/>
            <person name="Isogai T."/>
            <person name="Sugano S."/>
        </authorList>
    </citation>
    <scope>NUCLEOTIDE SEQUENCE [LARGE SCALE MRNA] (ISOFORM 1)</scope>
    <scope>VARIANT PRO-186</scope>
    <source>
        <tissue>Brain</tissue>
    </source>
</reference>
<reference key="3">
    <citation type="journal article" date="2006" name="Nature">
        <title>DNA sequence and analysis of human chromosome 8.</title>
        <authorList>
            <person name="Nusbaum C."/>
            <person name="Mikkelsen T.S."/>
            <person name="Zody M.C."/>
            <person name="Asakawa S."/>
            <person name="Taudien S."/>
            <person name="Garber M."/>
            <person name="Kodira C.D."/>
            <person name="Schueler M.G."/>
            <person name="Shimizu A."/>
            <person name="Whittaker C.A."/>
            <person name="Chang J.L."/>
            <person name="Cuomo C.A."/>
            <person name="Dewar K."/>
            <person name="FitzGerald M.G."/>
            <person name="Yang X."/>
            <person name="Allen N.R."/>
            <person name="Anderson S."/>
            <person name="Asakawa T."/>
            <person name="Blechschmidt K."/>
            <person name="Bloom T."/>
            <person name="Borowsky M.L."/>
            <person name="Butler J."/>
            <person name="Cook A."/>
            <person name="Corum B."/>
            <person name="DeArellano K."/>
            <person name="DeCaprio D."/>
            <person name="Dooley K.T."/>
            <person name="Dorris L. III"/>
            <person name="Engels R."/>
            <person name="Gloeckner G."/>
            <person name="Hafez N."/>
            <person name="Hagopian D.S."/>
            <person name="Hall J.L."/>
            <person name="Ishikawa S.K."/>
            <person name="Jaffe D.B."/>
            <person name="Kamat A."/>
            <person name="Kudoh J."/>
            <person name="Lehmann R."/>
            <person name="Lokitsang T."/>
            <person name="Macdonald P."/>
            <person name="Major J.E."/>
            <person name="Matthews C.D."/>
            <person name="Mauceli E."/>
            <person name="Menzel U."/>
            <person name="Mihalev A.H."/>
            <person name="Minoshima S."/>
            <person name="Murayama Y."/>
            <person name="Naylor J.W."/>
            <person name="Nicol R."/>
            <person name="Nguyen C."/>
            <person name="O'Leary S.B."/>
            <person name="O'Neill K."/>
            <person name="Parker S.C.J."/>
            <person name="Polley A."/>
            <person name="Raymond C.K."/>
            <person name="Reichwald K."/>
            <person name="Rodriguez J."/>
            <person name="Sasaki T."/>
            <person name="Schilhabel M."/>
            <person name="Siddiqui R."/>
            <person name="Smith C.L."/>
            <person name="Sneddon T.P."/>
            <person name="Talamas J.A."/>
            <person name="Tenzin P."/>
            <person name="Topham K."/>
            <person name="Venkataraman V."/>
            <person name="Wen G."/>
            <person name="Yamazaki S."/>
            <person name="Young S.K."/>
            <person name="Zeng Q."/>
            <person name="Zimmer A.R."/>
            <person name="Rosenthal A."/>
            <person name="Birren B.W."/>
            <person name="Platzer M."/>
            <person name="Shimizu N."/>
            <person name="Lander E.S."/>
        </authorList>
    </citation>
    <scope>NUCLEOTIDE SEQUENCE [LARGE SCALE GENOMIC DNA]</scope>
</reference>
<reference key="4">
    <citation type="submission" date="2005-07" db="EMBL/GenBank/DDBJ databases">
        <authorList>
            <person name="Mural R.J."/>
            <person name="Istrail S."/>
            <person name="Sutton G.G."/>
            <person name="Florea L."/>
            <person name="Halpern A.L."/>
            <person name="Mobarry C.M."/>
            <person name="Lippert R."/>
            <person name="Walenz B."/>
            <person name="Shatkay H."/>
            <person name="Dew I."/>
            <person name="Miller J.R."/>
            <person name="Flanigan M.J."/>
            <person name="Edwards N.J."/>
            <person name="Bolanos R."/>
            <person name="Fasulo D."/>
            <person name="Halldorsson B.V."/>
            <person name="Hannenhalli S."/>
            <person name="Turner R."/>
            <person name="Yooseph S."/>
            <person name="Lu F."/>
            <person name="Nusskern D.R."/>
            <person name="Shue B.C."/>
            <person name="Zheng X.H."/>
            <person name="Zhong F."/>
            <person name="Delcher A.L."/>
            <person name="Huson D.H."/>
            <person name="Kravitz S.A."/>
            <person name="Mouchard L."/>
            <person name="Reinert K."/>
            <person name="Remington K.A."/>
            <person name="Clark A.G."/>
            <person name="Waterman M.S."/>
            <person name="Eichler E.E."/>
            <person name="Adams M.D."/>
            <person name="Hunkapiller M.W."/>
            <person name="Myers E.W."/>
            <person name="Venter J.C."/>
        </authorList>
    </citation>
    <scope>NUCLEOTIDE SEQUENCE [LARGE SCALE GENOMIC DNA]</scope>
    <scope>VARIANT PRO-186</scope>
</reference>
<reference key="5">
    <citation type="journal article" date="2004" name="Genome Res.">
        <title>The status, quality, and expansion of the NIH full-length cDNA project: the Mammalian Gene Collection (MGC).</title>
        <authorList>
            <consortium name="The MGC Project Team"/>
        </authorList>
    </citation>
    <scope>NUCLEOTIDE SEQUENCE [LARGE SCALE MRNA] (ISOFORMS 2 AND 3)</scope>
    <scope>VARIANT PRO-186</scope>
    <source>
        <tissue>Lung</tissue>
        <tissue>Testis</tissue>
    </source>
</reference>
<reference key="6">
    <citation type="journal article" date="2011" name="EMBO Rep.">
        <title>LGR4 and LGR5 are R-spondin receptors mediating Wnt/beta-catenin and Wnt/PCP signalling.</title>
        <authorList>
            <person name="Glinka A."/>
            <person name="Dolde C."/>
            <person name="Kirsch N."/>
            <person name="Huang Y.L."/>
            <person name="Kazanskaya O."/>
            <person name="Ingelfinger D."/>
            <person name="Boutros M."/>
            <person name="Cruciat C.M."/>
            <person name="Niehrs C."/>
        </authorList>
    </citation>
    <scope>FUNCTION</scope>
    <scope>INTERACTION WITH LGR4 AND LGR5</scope>
</reference>
<reference key="7">
    <citation type="journal article" date="2011" name="Nature">
        <title>Lgr5 homologues associate with Wnt receptors and mediate R-spondin signalling.</title>
        <authorList>
            <person name="de Lau W."/>
            <person name="Barker N."/>
            <person name="Low T.Y."/>
            <person name="Koo B.K."/>
            <person name="Li V.S."/>
            <person name="Teunissen H."/>
            <person name="Kujala P."/>
            <person name="Haegebarth A."/>
            <person name="Peters P.J."/>
            <person name="van de Wetering M."/>
            <person name="Stange D.E."/>
            <person name="van Es J.E."/>
            <person name="Guardavaccaro D."/>
            <person name="Schasfoort R.B."/>
            <person name="Mohri Y."/>
            <person name="Nishimori K."/>
            <person name="Mohammed S."/>
            <person name="Heck A.J."/>
            <person name="Clevers H."/>
        </authorList>
    </citation>
    <scope>FUNCTION</scope>
    <scope>INTERACTION WITH LGR4; LGR5 AND LGR6</scope>
</reference>
<reference key="8">
    <citation type="journal article" date="2012" name="PLoS ONE">
        <title>LGR6 is a high affinity receptor of R-spondins and potentially functions as a tumor suppressor.</title>
        <authorList>
            <person name="Gong X."/>
            <person name="Carmon K.S."/>
            <person name="Lin Q."/>
            <person name="Thomas A."/>
            <person name="Yi J."/>
            <person name="Liu Q."/>
        </authorList>
    </citation>
    <scope>FUNCTION</scope>
    <scope>INTERACTION WITH LGR6</scope>
</reference>
<reference key="9">
    <citation type="journal article" date="2018" name="Nature">
        <title>RSPO2 inhibition of RNF43 and ZNRF3 governs limb development independently of LGR4/5/6.</title>
        <authorList>
            <person name="Szenker-Ravi E."/>
            <person name="Altunoglu U."/>
            <person name="Leushacke M."/>
            <person name="Bosso-Lefevre C."/>
            <person name="Khatoo M."/>
            <person name="Thi Tran H."/>
            <person name="Naert T."/>
            <person name="Noelanders R."/>
            <person name="Hajamohideen A."/>
            <person name="Beneteau C."/>
            <person name="de Sousa S.B."/>
            <person name="Karaman B."/>
            <person name="Latypova X."/>
            <person name="Basaran S."/>
            <person name="Yuecel E.B."/>
            <person name="Tan T.T."/>
            <person name="Vlaminck L."/>
            <person name="Nayak S.S."/>
            <person name="Shukla A."/>
            <person name="Girisha K.M."/>
            <person name="Le Caignec C."/>
            <person name="Soshnikova N."/>
            <person name="Uyguner Z.O."/>
            <person name="Vleminckx K."/>
            <person name="Barker N."/>
            <person name="Kayserili H."/>
            <person name="Reversade B."/>
        </authorList>
    </citation>
    <scope>INVOLVEMENT IN TETAMS2</scope>
    <scope>VARIANTS TETAMS2 70-GLN--GLN-243 DEL AND 137-GLU--GLN-243 DEL</scope>
    <scope>INVOLVEMENT IN HHRRD</scope>
    <scope>VARIANT HHRRD CYS-69</scope>
    <scope>CHARACTERIZATION OF VARIANT TETAMS2 70-GLN--GLN-243</scope>
    <scope>CHARACTERIZATION OF VARIANT HHRRD CYS-69</scope>
    <scope>FUNCTION</scope>
    <scope>INTERACTION WITH LGR5; RNF43 AND ZNRF3</scope>
    <scope>MUTAGENESIS OF PHE-105 AND PHE-109</scope>
</reference>
<organism>
    <name type="scientific">Homo sapiens</name>
    <name type="common">Human</name>
    <dbReference type="NCBI Taxonomy" id="9606"/>
    <lineage>
        <taxon>Eukaryota</taxon>
        <taxon>Metazoa</taxon>
        <taxon>Chordata</taxon>
        <taxon>Craniata</taxon>
        <taxon>Vertebrata</taxon>
        <taxon>Euteleostomi</taxon>
        <taxon>Mammalia</taxon>
        <taxon>Eutheria</taxon>
        <taxon>Euarchontoglires</taxon>
        <taxon>Primates</taxon>
        <taxon>Haplorrhini</taxon>
        <taxon>Catarrhini</taxon>
        <taxon>Hominidae</taxon>
        <taxon>Homo</taxon>
    </lineage>
</organism>
<accession>Q6UXX9</accession>
<accession>B3KVP0</accession>
<accession>Q4G0U4</accession>
<accession>Q8N6X6</accession>
<keyword id="KW-0002">3D-structure</keyword>
<keyword id="KW-0025">Alternative splicing</keyword>
<keyword id="KW-0217">Developmental protein</keyword>
<keyword id="KW-0225">Disease variant</keyword>
<keyword id="KW-1015">Disulfide bond</keyword>
<keyword id="KW-0325">Glycoprotein</keyword>
<keyword id="KW-0358">Heparin-binding</keyword>
<keyword id="KW-1267">Proteomics identification</keyword>
<keyword id="KW-1185">Reference proteome</keyword>
<keyword id="KW-0964">Secreted</keyword>
<keyword id="KW-0716">Sensory transduction</keyword>
<keyword id="KW-0732">Signal</keyword>
<keyword id="KW-0879">Wnt signaling pathway</keyword>
<feature type="signal peptide" evidence="3">
    <location>
        <begin position="1"/>
        <end position="21"/>
    </location>
</feature>
<feature type="chain" id="PRO_0000234439" description="R-spondin-2">
    <location>
        <begin position="22"/>
        <end position="243"/>
    </location>
</feature>
<feature type="repeat" description="FU">
    <location>
        <begin position="90"/>
        <end position="134"/>
    </location>
</feature>
<feature type="domain" description="TSP type-1" evidence="4">
    <location>
        <begin position="144"/>
        <end position="204"/>
    </location>
</feature>
<feature type="region of interest" description="Disordered" evidence="5">
    <location>
        <begin position="204"/>
        <end position="243"/>
    </location>
</feature>
<feature type="compositionally biased region" description="Basic residues" evidence="5">
    <location>
        <begin position="204"/>
        <end position="224"/>
    </location>
</feature>
<feature type="glycosylation site" description="N-linked (GlcNAc...) asparagine" evidence="3">
    <location>
        <position position="160"/>
    </location>
</feature>
<feature type="disulfide bond" evidence="4">
    <location>
        <begin position="40"/>
        <end position="46"/>
    </location>
</feature>
<feature type="disulfide bond" evidence="4">
    <location>
        <begin position="43"/>
        <end position="52"/>
    </location>
</feature>
<feature type="disulfide bond" evidence="4">
    <location>
        <begin position="55"/>
        <end position="74"/>
    </location>
</feature>
<feature type="disulfide bond" evidence="4">
    <location>
        <begin position="78"/>
        <end position="93"/>
    </location>
</feature>
<feature type="disulfide bond" evidence="4">
    <location>
        <begin position="96"/>
        <end position="104"/>
    </location>
</feature>
<feature type="disulfide bond" evidence="4">
    <location>
        <begin position="101"/>
        <end position="110"/>
    </location>
</feature>
<feature type="disulfide bond" evidence="4">
    <location>
        <begin position="113"/>
        <end position="124"/>
    </location>
</feature>
<feature type="disulfide bond" evidence="4">
    <location>
        <begin position="128"/>
        <end position="141"/>
    </location>
</feature>
<feature type="disulfide bond" evidence="4">
    <location>
        <begin position="145"/>
        <end position="187"/>
    </location>
</feature>
<feature type="disulfide bond" evidence="4">
    <location>
        <begin position="156"/>
        <end position="163"/>
    </location>
</feature>
<feature type="disulfide bond" evidence="4">
    <location>
        <begin position="196"/>
        <end position="203"/>
    </location>
</feature>
<feature type="splice variant" id="VSP_018321" description="In isoform 2." evidence="14">
    <location>
        <begin position="1"/>
        <end position="67"/>
    </location>
</feature>
<feature type="splice variant" id="VSP_018322" description="In isoform 3." evidence="14">
    <original>ASYVSNPICKGCLSCSKDNGCSRCQQKLFFFLRREGMRQYGECLHSCPSGYYGHRAPDMNRCAR</original>
    <variation>G</variation>
    <location>
        <begin position="32"/>
        <end position="95"/>
    </location>
</feature>
<feature type="splice variant" id="VSP_018323" description="In isoform 3." evidence="14">
    <location>
        <position position="143"/>
    </location>
</feature>
<feature type="sequence variant" id="VAR_081036" description="In HHRRD; loss of LGR5-, RNF43- and ZNRF3-binding; decreased ability to amplify WNT3A signaling; dbSNP:rs758888137." evidence="12">
    <original>R</original>
    <variation>C</variation>
    <location>
        <position position="69"/>
    </location>
</feature>
<feature type="sequence variant" id="VAR_081037" description="In TETAMS2; loss of LGR5-, RNF43- and ZNRF3-binding; complete loss of amplification of WNT3A signaling." evidence="12">
    <location>
        <begin position="70"/>
        <end position="243"/>
    </location>
</feature>
<feature type="sequence variant" id="VAR_081038" description="In TETAMS2." evidence="12">
    <location>
        <begin position="137"/>
        <end position="243"/>
    </location>
</feature>
<feature type="sequence variant" id="VAR_026247" description="In dbSNP:rs601558." evidence="6 7 8 13">
    <original>L</original>
    <variation>P</variation>
    <location>
        <position position="186"/>
    </location>
</feature>
<feature type="mutagenesis site" description="Loss of LGR5-binding, no effect on interaction with RNF43 and ZNRF3, no effect on WNT3A signaling; when associated with A-109." evidence="12">
    <original>F</original>
    <variation>A</variation>
    <location>
        <position position="105"/>
    </location>
</feature>
<feature type="mutagenesis site" description="Loss of LGR5-binding, no effect on interaction with RNF43 and ZNRF3, no effect on WNT3A signaling; when associated with A-105." evidence="12">
    <original>F</original>
    <variation>A</variation>
    <location>
        <position position="109"/>
    </location>
</feature>
<feature type="turn" evidence="16">
    <location>
        <begin position="48"/>
        <end position="50"/>
    </location>
</feature>
<feature type="strand" evidence="16">
    <location>
        <begin position="60"/>
        <end position="66"/>
    </location>
</feature>
<feature type="strand" evidence="16">
    <location>
        <begin position="69"/>
        <end position="77"/>
    </location>
</feature>
<feature type="strand" evidence="16">
    <location>
        <begin position="82"/>
        <end position="85"/>
    </location>
</feature>
<feature type="strand" evidence="16">
    <location>
        <begin position="92"/>
        <end position="95"/>
    </location>
</feature>
<feature type="strand" evidence="16">
    <location>
        <begin position="101"/>
        <end position="106"/>
    </location>
</feature>
<feature type="strand" evidence="16">
    <location>
        <begin position="109"/>
        <end position="113"/>
    </location>
</feature>
<feature type="strand" evidence="16">
    <location>
        <begin position="118"/>
        <end position="127"/>
    </location>
</feature>
<feature type="turn" evidence="16">
    <location>
        <begin position="136"/>
        <end position="139"/>
    </location>
</feature>
<name>RSPO2_HUMAN</name>
<gene>
    <name type="primary">RSPO2</name>
    <name type="ORF">UNQ9384/PRO34209</name>
</gene>